<accession>B2SVJ9</accession>
<dbReference type="EC" id="2.7.7.8" evidence="1"/>
<dbReference type="EMBL" id="CP000967">
    <property type="protein sequence ID" value="ACD60073.1"/>
    <property type="molecule type" value="Genomic_DNA"/>
</dbReference>
<dbReference type="RefSeq" id="WP_011259733.1">
    <property type="nucleotide sequence ID" value="NC_010717.2"/>
</dbReference>
<dbReference type="SMR" id="B2SVJ9"/>
<dbReference type="KEGG" id="xop:PXO_01307"/>
<dbReference type="eggNOG" id="COG1185">
    <property type="taxonomic scope" value="Bacteria"/>
</dbReference>
<dbReference type="HOGENOM" id="CLU_004217_2_2_6"/>
<dbReference type="Proteomes" id="UP000001740">
    <property type="component" value="Chromosome"/>
</dbReference>
<dbReference type="GO" id="GO:0005829">
    <property type="term" value="C:cytosol"/>
    <property type="evidence" value="ECO:0007669"/>
    <property type="project" value="TreeGrafter"/>
</dbReference>
<dbReference type="GO" id="GO:0000175">
    <property type="term" value="F:3'-5'-RNA exonuclease activity"/>
    <property type="evidence" value="ECO:0007669"/>
    <property type="project" value="TreeGrafter"/>
</dbReference>
<dbReference type="GO" id="GO:0000287">
    <property type="term" value="F:magnesium ion binding"/>
    <property type="evidence" value="ECO:0007669"/>
    <property type="project" value="UniProtKB-UniRule"/>
</dbReference>
<dbReference type="GO" id="GO:0004654">
    <property type="term" value="F:polyribonucleotide nucleotidyltransferase activity"/>
    <property type="evidence" value="ECO:0007669"/>
    <property type="project" value="UniProtKB-UniRule"/>
</dbReference>
<dbReference type="GO" id="GO:0003723">
    <property type="term" value="F:RNA binding"/>
    <property type="evidence" value="ECO:0007669"/>
    <property type="project" value="UniProtKB-UniRule"/>
</dbReference>
<dbReference type="GO" id="GO:0006402">
    <property type="term" value="P:mRNA catabolic process"/>
    <property type="evidence" value="ECO:0007669"/>
    <property type="project" value="UniProtKB-UniRule"/>
</dbReference>
<dbReference type="GO" id="GO:0006396">
    <property type="term" value="P:RNA processing"/>
    <property type="evidence" value="ECO:0007669"/>
    <property type="project" value="InterPro"/>
</dbReference>
<dbReference type="CDD" id="cd02393">
    <property type="entry name" value="KH-I_PNPase"/>
    <property type="match status" value="1"/>
</dbReference>
<dbReference type="CDD" id="cd11363">
    <property type="entry name" value="RNase_PH_PNPase_1"/>
    <property type="match status" value="1"/>
</dbReference>
<dbReference type="CDD" id="cd11364">
    <property type="entry name" value="RNase_PH_PNPase_2"/>
    <property type="match status" value="1"/>
</dbReference>
<dbReference type="CDD" id="cd04472">
    <property type="entry name" value="S1_PNPase"/>
    <property type="match status" value="1"/>
</dbReference>
<dbReference type="FunFam" id="2.40.50.140:FF:000023">
    <property type="entry name" value="Polyribonucleotide nucleotidyltransferase"/>
    <property type="match status" value="1"/>
</dbReference>
<dbReference type="FunFam" id="3.30.1370.10:FF:000001">
    <property type="entry name" value="Polyribonucleotide nucleotidyltransferase"/>
    <property type="match status" value="1"/>
</dbReference>
<dbReference type="FunFam" id="3.30.230.70:FF:000001">
    <property type="entry name" value="Polyribonucleotide nucleotidyltransferase"/>
    <property type="match status" value="1"/>
</dbReference>
<dbReference type="FunFam" id="3.30.230.70:FF:000002">
    <property type="entry name" value="Polyribonucleotide nucleotidyltransferase"/>
    <property type="match status" value="1"/>
</dbReference>
<dbReference type="Gene3D" id="3.30.230.70">
    <property type="entry name" value="GHMP Kinase, N-terminal domain"/>
    <property type="match status" value="2"/>
</dbReference>
<dbReference type="Gene3D" id="3.30.1370.10">
    <property type="entry name" value="K Homology domain, type 1"/>
    <property type="match status" value="1"/>
</dbReference>
<dbReference type="Gene3D" id="2.40.50.140">
    <property type="entry name" value="Nucleic acid-binding proteins"/>
    <property type="match status" value="1"/>
</dbReference>
<dbReference type="HAMAP" id="MF_01595">
    <property type="entry name" value="PNPase"/>
    <property type="match status" value="1"/>
</dbReference>
<dbReference type="InterPro" id="IPR001247">
    <property type="entry name" value="ExoRNase_PH_dom1"/>
</dbReference>
<dbReference type="InterPro" id="IPR015847">
    <property type="entry name" value="ExoRNase_PH_dom2"/>
</dbReference>
<dbReference type="InterPro" id="IPR036345">
    <property type="entry name" value="ExoRNase_PH_dom2_sf"/>
</dbReference>
<dbReference type="InterPro" id="IPR004087">
    <property type="entry name" value="KH_dom"/>
</dbReference>
<dbReference type="InterPro" id="IPR004088">
    <property type="entry name" value="KH_dom_type_1"/>
</dbReference>
<dbReference type="InterPro" id="IPR036612">
    <property type="entry name" value="KH_dom_type_1_sf"/>
</dbReference>
<dbReference type="InterPro" id="IPR012340">
    <property type="entry name" value="NA-bd_OB-fold"/>
</dbReference>
<dbReference type="InterPro" id="IPR012162">
    <property type="entry name" value="PNPase"/>
</dbReference>
<dbReference type="InterPro" id="IPR027408">
    <property type="entry name" value="PNPase/RNase_PH_dom_sf"/>
</dbReference>
<dbReference type="InterPro" id="IPR015848">
    <property type="entry name" value="PNPase_PH_RNA-bd_bac/org-type"/>
</dbReference>
<dbReference type="InterPro" id="IPR036456">
    <property type="entry name" value="PNPase_PH_RNA-bd_sf"/>
</dbReference>
<dbReference type="InterPro" id="IPR020568">
    <property type="entry name" value="Ribosomal_Su5_D2-typ_SF"/>
</dbReference>
<dbReference type="InterPro" id="IPR003029">
    <property type="entry name" value="S1_domain"/>
</dbReference>
<dbReference type="NCBIfam" id="TIGR03591">
    <property type="entry name" value="polynuc_phos"/>
    <property type="match status" value="1"/>
</dbReference>
<dbReference type="NCBIfam" id="NF008805">
    <property type="entry name" value="PRK11824.1"/>
    <property type="match status" value="1"/>
</dbReference>
<dbReference type="PANTHER" id="PTHR11252">
    <property type="entry name" value="POLYRIBONUCLEOTIDE NUCLEOTIDYLTRANSFERASE"/>
    <property type="match status" value="1"/>
</dbReference>
<dbReference type="PANTHER" id="PTHR11252:SF0">
    <property type="entry name" value="POLYRIBONUCLEOTIDE NUCLEOTIDYLTRANSFERASE 1, MITOCHONDRIAL"/>
    <property type="match status" value="1"/>
</dbReference>
<dbReference type="Pfam" id="PF00013">
    <property type="entry name" value="KH_1"/>
    <property type="match status" value="1"/>
</dbReference>
<dbReference type="Pfam" id="PF03726">
    <property type="entry name" value="PNPase"/>
    <property type="match status" value="1"/>
</dbReference>
<dbReference type="Pfam" id="PF01138">
    <property type="entry name" value="RNase_PH"/>
    <property type="match status" value="2"/>
</dbReference>
<dbReference type="Pfam" id="PF03725">
    <property type="entry name" value="RNase_PH_C"/>
    <property type="match status" value="2"/>
</dbReference>
<dbReference type="Pfam" id="PF00575">
    <property type="entry name" value="S1"/>
    <property type="match status" value="1"/>
</dbReference>
<dbReference type="PIRSF" id="PIRSF005499">
    <property type="entry name" value="PNPase"/>
    <property type="match status" value="1"/>
</dbReference>
<dbReference type="SMART" id="SM00322">
    <property type="entry name" value="KH"/>
    <property type="match status" value="1"/>
</dbReference>
<dbReference type="SMART" id="SM00316">
    <property type="entry name" value="S1"/>
    <property type="match status" value="1"/>
</dbReference>
<dbReference type="SUPFAM" id="SSF54791">
    <property type="entry name" value="Eukaryotic type KH-domain (KH-domain type I)"/>
    <property type="match status" value="1"/>
</dbReference>
<dbReference type="SUPFAM" id="SSF50249">
    <property type="entry name" value="Nucleic acid-binding proteins"/>
    <property type="match status" value="1"/>
</dbReference>
<dbReference type="SUPFAM" id="SSF46915">
    <property type="entry name" value="Polynucleotide phosphorylase/guanosine pentaphosphate synthase (PNPase/GPSI), domain 3"/>
    <property type="match status" value="1"/>
</dbReference>
<dbReference type="SUPFAM" id="SSF55666">
    <property type="entry name" value="Ribonuclease PH domain 2-like"/>
    <property type="match status" value="2"/>
</dbReference>
<dbReference type="SUPFAM" id="SSF54211">
    <property type="entry name" value="Ribosomal protein S5 domain 2-like"/>
    <property type="match status" value="2"/>
</dbReference>
<dbReference type="PROSITE" id="PS50084">
    <property type="entry name" value="KH_TYPE_1"/>
    <property type="match status" value="1"/>
</dbReference>
<dbReference type="PROSITE" id="PS50126">
    <property type="entry name" value="S1"/>
    <property type="match status" value="1"/>
</dbReference>
<proteinExistence type="inferred from homology"/>
<name>PNP_XANOP</name>
<organism>
    <name type="scientific">Xanthomonas oryzae pv. oryzae (strain PXO99A)</name>
    <dbReference type="NCBI Taxonomy" id="360094"/>
    <lineage>
        <taxon>Bacteria</taxon>
        <taxon>Pseudomonadati</taxon>
        <taxon>Pseudomonadota</taxon>
        <taxon>Gammaproteobacteria</taxon>
        <taxon>Lysobacterales</taxon>
        <taxon>Lysobacteraceae</taxon>
        <taxon>Xanthomonas</taxon>
    </lineage>
</organism>
<gene>
    <name evidence="1" type="primary">pnp</name>
    <name type="ordered locus">PXO_01307</name>
</gene>
<evidence type="ECO:0000255" key="1">
    <source>
        <dbReference type="HAMAP-Rule" id="MF_01595"/>
    </source>
</evidence>
<sequence>MAKITKTFQYGKHTVTLETGEIARQAGGAVIVKFDDTVLLVTAVAAKSAREGQDFFPLTVDYQEKFYAGGRIPGGFFKREGRATEKETLISRLIDRPIRPLFPEDYKNEVQIIATVMSMNPDIDGDIAALIGASAALSLAGTPFNGPIAAAKVGYKNGEYILNPTVTDLKDSQLELVVAGTANAVLMVESEAELLSEEVMLGAVTFGHREMQKVINIINELAVEAGTKPSDWVAPAKNDGMIAALKEAVGDQLASAFQVRDKLQRRDAISAIKKDVLGALAPRATIEGWAAGDLAKEFGELEYQTMRGSVLSTKVRIDGRALDTVRPISAKAGVLPRTHGSALFTRGETQAIVITTLGTARDGQVIDAVSGEYKENFLFHYNFPPYSVGECGRFGAPKRREIGHGRLAKRGVLAVMPSLEEFPYTIRVVSEITESNGSSSMASVCGSSLALMDAGVPIKAPVAGIAMGLVKEGNDFVVLSDILGDEDHLGDMDFKVAGTAEGVSALQMDIKIEGITEEIMKQALQQAKAGRLHILGEMAHALTTPRQELSDYAPRLLTIKIHPDKIREVIGKGGSTIQAITKETGTQIDIQDDGTIIIASVNAIAAQAAKSRIEQITSDVEPGRIYEGKVAKIMDFGAFVTILPGKDGLVHVSQISSERVEKVGDKLKEGDLVRVKVLEVDKQGRIRLSIKAVEEGEGVPASAE</sequence>
<protein>
    <recommendedName>
        <fullName evidence="1">Polyribonucleotide nucleotidyltransferase</fullName>
        <ecNumber evidence="1">2.7.7.8</ecNumber>
    </recommendedName>
    <alternativeName>
        <fullName evidence="1">Polynucleotide phosphorylase</fullName>
        <shortName evidence="1">PNPase</shortName>
    </alternativeName>
</protein>
<keyword id="KW-0963">Cytoplasm</keyword>
<keyword id="KW-0460">Magnesium</keyword>
<keyword id="KW-0479">Metal-binding</keyword>
<keyword id="KW-0548">Nucleotidyltransferase</keyword>
<keyword id="KW-0694">RNA-binding</keyword>
<keyword id="KW-0808">Transferase</keyword>
<reference key="1">
    <citation type="journal article" date="2008" name="BMC Genomics">
        <title>Genome sequence and rapid evolution of the rice pathogen Xanthomonas oryzae pv. oryzae PXO99A.</title>
        <authorList>
            <person name="Salzberg S.L."/>
            <person name="Sommer D.D."/>
            <person name="Schatz M.C."/>
            <person name="Phillippy A.M."/>
            <person name="Rabinowicz P.D."/>
            <person name="Tsuge S."/>
            <person name="Furutani A."/>
            <person name="Ochiai H."/>
            <person name="Delcher A.L."/>
            <person name="Kelley D."/>
            <person name="Madupu R."/>
            <person name="Puiu D."/>
            <person name="Radune D."/>
            <person name="Shumway M."/>
            <person name="Trapnell C."/>
            <person name="Aparna G."/>
            <person name="Jha G."/>
            <person name="Pandey A."/>
            <person name="Patil P.B."/>
            <person name="Ishihara H."/>
            <person name="Meyer D.F."/>
            <person name="Szurek B."/>
            <person name="Verdier V."/>
            <person name="Koebnik R."/>
            <person name="Dow J.M."/>
            <person name="Ryan R.P."/>
            <person name="Hirata H."/>
            <person name="Tsuyumu S."/>
            <person name="Won Lee S."/>
            <person name="Seo Y.-S."/>
            <person name="Sriariyanum M."/>
            <person name="Ronald P.C."/>
            <person name="Sonti R.V."/>
            <person name="Van Sluys M.-A."/>
            <person name="Leach J.E."/>
            <person name="White F.F."/>
            <person name="Bogdanove A.J."/>
        </authorList>
    </citation>
    <scope>NUCLEOTIDE SEQUENCE [LARGE SCALE GENOMIC DNA]</scope>
    <source>
        <strain>PXO99A</strain>
    </source>
</reference>
<feature type="chain" id="PRO_1000192507" description="Polyribonucleotide nucleotidyltransferase">
    <location>
        <begin position="1"/>
        <end position="704"/>
    </location>
</feature>
<feature type="domain" description="KH" evidence="1">
    <location>
        <begin position="554"/>
        <end position="613"/>
    </location>
</feature>
<feature type="domain" description="S1 motif" evidence="1">
    <location>
        <begin position="623"/>
        <end position="691"/>
    </location>
</feature>
<feature type="binding site" evidence="1">
    <location>
        <position position="487"/>
    </location>
    <ligand>
        <name>Mg(2+)</name>
        <dbReference type="ChEBI" id="CHEBI:18420"/>
    </ligand>
</feature>
<feature type="binding site" evidence="1">
    <location>
        <position position="493"/>
    </location>
    <ligand>
        <name>Mg(2+)</name>
        <dbReference type="ChEBI" id="CHEBI:18420"/>
    </ligand>
</feature>
<comment type="function">
    <text evidence="1">Involved in mRNA degradation. Catalyzes the phosphorolysis of single-stranded polyribonucleotides processively in the 3'- to 5'-direction.</text>
</comment>
<comment type="catalytic activity">
    <reaction evidence="1">
        <text>RNA(n+1) + phosphate = RNA(n) + a ribonucleoside 5'-diphosphate</text>
        <dbReference type="Rhea" id="RHEA:22096"/>
        <dbReference type="Rhea" id="RHEA-COMP:14527"/>
        <dbReference type="Rhea" id="RHEA-COMP:17342"/>
        <dbReference type="ChEBI" id="CHEBI:43474"/>
        <dbReference type="ChEBI" id="CHEBI:57930"/>
        <dbReference type="ChEBI" id="CHEBI:140395"/>
        <dbReference type="EC" id="2.7.7.8"/>
    </reaction>
</comment>
<comment type="cofactor">
    <cofactor evidence="1">
        <name>Mg(2+)</name>
        <dbReference type="ChEBI" id="CHEBI:18420"/>
    </cofactor>
</comment>
<comment type="subunit">
    <text evidence="1">Component of the RNA degradosome, which is a multiprotein complex involved in RNA processing and mRNA degradation.</text>
</comment>
<comment type="subcellular location">
    <subcellularLocation>
        <location evidence="1">Cytoplasm</location>
    </subcellularLocation>
</comment>
<comment type="similarity">
    <text evidence="1">Belongs to the polyribonucleotide nucleotidyltransferase family.</text>
</comment>